<evidence type="ECO:0000255" key="1">
    <source>
        <dbReference type="HAMAP-Rule" id="MF_00185"/>
    </source>
</evidence>
<gene>
    <name evidence="1" type="primary">miaA</name>
    <name type="ordered locus">CF0158</name>
</gene>
<reference key="1">
    <citation type="journal article" date="2006" name="DNA Res.">
        <title>Genome sequence of the cat pathogen, Chlamydophila felis.</title>
        <authorList>
            <person name="Azuma Y."/>
            <person name="Hirakawa H."/>
            <person name="Yamashita A."/>
            <person name="Cai Y."/>
            <person name="Rahman M.A."/>
            <person name="Suzuki H."/>
            <person name="Mitaku S."/>
            <person name="Toh H."/>
            <person name="Goto S."/>
            <person name="Murakami T."/>
            <person name="Sugi K."/>
            <person name="Hayashi H."/>
            <person name="Fukushi H."/>
            <person name="Hattori M."/>
            <person name="Kuhara S."/>
            <person name="Shirai M."/>
        </authorList>
    </citation>
    <scope>NUCLEOTIDE SEQUENCE [LARGE SCALE GENOMIC DNA]</scope>
    <source>
        <strain>Fe/C-56</strain>
    </source>
</reference>
<feature type="chain" id="PRO_0000377115" description="tRNA dimethylallyltransferase">
    <location>
        <begin position="1"/>
        <end position="342"/>
    </location>
</feature>
<feature type="region of interest" description="Interaction with substrate tRNA" evidence="1">
    <location>
        <begin position="64"/>
        <end position="67"/>
    </location>
</feature>
<feature type="binding site" evidence="1">
    <location>
        <begin position="39"/>
        <end position="46"/>
    </location>
    <ligand>
        <name>ATP</name>
        <dbReference type="ChEBI" id="CHEBI:30616"/>
    </ligand>
</feature>
<feature type="binding site" evidence="1">
    <location>
        <begin position="41"/>
        <end position="46"/>
    </location>
    <ligand>
        <name>substrate</name>
    </ligand>
</feature>
<feature type="site" description="Interaction with substrate tRNA" evidence="1">
    <location>
        <position position="130"/>
    </location>
</feature>
<feature type="site" description="Interaction with substrate tRNA" evidence="1">
    <location>
        <position position="152"/>
    </location>
</feature>
<accession>Q255V8</accession>
<proteinExistence type="inferred from homology"/>
<name>MIAA_CHLFF</name>
<dbReference type="EC" id="2.5.1.75" evidence="1"/>
<dbReference type="EMBL" id="AP006861">
    <property type="protein sequence ID" value="BAE80930.1"/>
    <property type="molecule type" value="Genomic_DNA"/>
</dbReference>
<dbReference type="RefSeq" id="WP_011457715.1">
    <property type="nucleotide sequence ID" value="NC_007899.1"/>
</dbReference>
<dbReference type="SMR" id="Q255V8"/>
<dbReference type="STRING" id="264202.CF0158"/>
<dbReference type="KEGG" id="cfe:CF0158"/>
<dbReference type="eggNOG" id="COG0324">
    <property type="taxonomic scope" value="Bacteria"/>
</dbReference>
<dbReference type="HOGENOM" id="CLU_032616_0_1_0"/>
<dbReference type="OrthoDB" id="9776390at2"/>
<dbReference type="Proteomes" id="UP000001260">
    <property type="component" value="Chromosome"/>
</dbReference>
<dbReference type="GO" id="GO:0005524">
    <property type="term" value="F:ATP binding"/>
    <property type="evidence" value="ECO:0007669"/>
    <property type="project" value="UniProtKB-UniRule"/>
</dbReference>
<dbReference type="GO" id="GO:0052381">
    <property type="term" value="F:tRNA dimethylallyltransferase activity"/>
    <property type="evidence" value="ECO:0007669"/>
    <property type="project" value="UniProtKB-UniRule"/>
</dbReference>
<dbReference type="GO" id="GO:0006400">
    <property type="term" value="P:tRNA modification"/>
    <property type="evidence" value="ECO:0007669"/>
    <property type="project" value="TreeGrafter"/>
</dbReference>
<dbReference type="Gene3D" id="1.10.20.140">
    <property type="match status" value="1"/>
</dbReference>
<dbReference type="Gene3D" id="3.40.50.300">
    <property type="entry name" value="P-loop containing nucleotide triphosphate hydrolases"/>
    <property type="match status" value="1"/>
</dbReference>
<dbReference type="HAMAP" id="MF_00185">
    <property type="entry name" value="IPP_trans"/>
    <property type="match status" value="1"/>
</dbReference>
<dbReference type="InterPro" id="IPR039657">
    <property type="entry name" value="Dimethylallyltransferase"/>
</dbReference>
<dbReference type="InterPro" id="IPR018022">
    <property type="entry name" value="IPT"/>
</dbReference>
<dbReference type="InterPro" id="IPR027417">
    <property type="entry name" value="P-loop_NTPase"/>
</dbReference>
<dbReference type="NCBIfam" id="TIGR00174">
    <property type="entry name" value="miaA"/>
    <property type="match status" value="1"/>
</dbReference>
<dbReference type="PANTHER" id="PTHR11088">
    <property type="entry name" value="TRNA DIMETHYLALLYLTRANSFERASE"/>
    <property type="match status" value="1"/>
</dbReference>
<dbReference type="PANTHER" id="PTHR11088:SF60">
    <property type="entry name" value="TRNA DIMETHYLALLYLTRANSFERASE"/>
    <property type="match status" value="1"/>
</dbReference>
<dbReference type="Pfam" id="PF01715">
    <property type="entry name" value="IPPT"/>
    <property type="match status" value="1"/>
</dbReference>
<dbReference type="SUPFAM" id="SSF52540">
    <property type="entry name" value="P-loop containing nucleoside triphosphate hydrolases"/>
    <property type="match status" value="1"/>
</dbReference>
<sequence>MRAPEFQANAITSTGCDVCLDPQKSFAKLFKRTIILLAGPTGSGKTDVSLCLAPMVDGEIVSVDSMQVYRGMDIGTAKVSLEARQRIPHYLIDICHVQELFNAVDFYYQATQACQNILSRNKVPILVGGSGFYFHTFLSGPPEGPPADREFRDHLALYIQKNGLSLLYDNLCMKDPEYARTITKNDKNKIVRALEIIHLTGKKVSEHNWSMEAKEPREYNCRGWFLSSPRDLLRDNIQLRCRRMLEDNLIDEVHRLLEQGIRENPSASKAIGYREWIDFIDQGSPKEAYEDVKNKFIANTLYYIKKQRTWFKRYPMFRELPTLGLTAETIAEKIAEDYFLHG</sequence>
<protein>
    <recommendedName>
        <fullName evidence="1">tRNA dimethylallyltransferase</fullName>
        <ecNumber evidence="1">2.5.1.75</ecNumber>
    </recommendedName>
    <alternativeName>
        <fullName evidence="1">Dimethylallyl diphosphate:tRNA dimethylallyltransferase</fullName>
        <shortName evidence="1">DMAPP:tRNA dimethylallyltransferase</shortName>
        <shortName evidence="1">DMATase</shortName>
    </alternativeName>
    <alternativeName>
        <fullName evidence="1">Isopentenyl-diphosphate:tRNA isopentenyltransferase</fullName>
        <shortName evidence="1">IPP transferase</shortName>
        <shortName evidence="1">IPPT</shortName>
        <shortName evidence="1">IPTase</shortName>
    </alternativeName>
</protein>
<keyword id="KW-0067">ATP-binding</keyword>
<keyword id="KW-0460">Magnesium</keyword>
<keyword id="KW-0547">Nucleotide-binding</keyword>
<keyword id="KW-0808">Transferase</keyword>
<keyword id="KW-0819">tRNA processing</keyword>
<comment type="function">
    <text evidence="1">Catalyzes the transfer of a dimethylallyl group onto the adenine at position 37 in tRNAs that read codons beginning with uridine, leading to the formation of N6-(dimethylallyl)adenosine (i(6)A).</text>
</comment>
<comment type="catalytic activity">
    <reaction evidence="1">
        <text>adenosine(37) in tRNA + dimethylallyl diphosphate = N(6)-dimethylallyladenosine(37) in tRNA + diphosphate</text>
        <dbReference type="Rhea" id="RHEA:26482"/>
        <dbReference type="Rhea" id="RHEA-COMP:10162"/>
        <dbReference type="Rhea" id="RHEA-COMP:10375"/>
        <dbReference type="ChEBI" id="CHEBI:33019"/>
        <dbReference type="ChEBI" id="CHEBI:57623"/>
        <dbReference type="ChEBI" id="CHEBI:74411"/>
        <dbReference type="ChEBI" id="CHEBI:74415"/>
        <dbReference type="EC" id="2.5.1.75"/>
    </reaction>
</comment>
<comment type="cofactor">
    <cofactor evidence="1">
        <name>Mg(2+)</name>
        <dbReference type="ChEBI" id="CHEBI:18420"/>
    </cofactor>
</comment>
<comment type="subunit">
    <text evidence="1">Monomer.</text>
</comment>
<comment type="similarity">
    <text evidence="1">Belongs to the IPP transferase family.</text>
</comment>
<organism>
    <name type="scientific">Chlamydia felis (strain Fe/C-56)</name>
    <name type="common">Chlamydophila felis</name>
    <dbReference type="NCBI Taxonomy" id="264202"/>
    <lineage>
        <taxon>Bacteria</taxon>
        <taxon>Pseudomonadati</taxon>
        <taxon>Chlamydiota</taxon>
        <taxon>Chlamydiia</taxon>
        <taxon>Chlamydiales</taxon>
        <taxon>Chlamydiaceae</taxon>
        <taxon>Chlamydia/Chlamydophila group</taxon>
        <taxon>Chlamydia</taxon>
    </lineage>
</organism>